<name>FLIE_PSESM</name>
<keyword id="KW-0975">Bacterial flagellum</keyword>
<keyword id="KW-1185">Reference proteome</keyword>
<dbReference type="EMBL" id="AE016853">
    <property type="protein sequence ID" value="AAO55475.1"/>
    <property type="status" value="ALT_INIT"/>
    <property type="molecule type" value="Genomic_DNA"/>
</dbReference>
<dbReference type="RefSeq" id="NP_791780.3">
    <property type="nucleotide sequence ID" value="NC_004578.1"/>
</dbReference>
<dbReference type="RefSeq" id="WP_003382144.1">
    <property type="nucleotide sequence ID" value="NC_004578.1"/>
</dbReference>
<dbReference type="SMR" id="Q884X9"/>
<dbReference type="STRING" id="223283.PSPTO_1957"/>
<dbReference type="GeneID" id="61789679"/>
<dbReference type="KEGG" id="pst:PSPTO_1957"/>
<dbReference type="PATRIC" id="fig|223283.9.peg.1987"/>
<dbReference type="eggNOG" id="COG1677">
    <property type="taxonomic scope" value="Bacteria"/>
</dbReference>
<dbReference type="HOGENOM" id="CLU_147249_0_0_6"/>
<dbReference type="OrthoDB" id="8909229at2"/>
<dbReference type="Proteomes" id="UP000002515">
    <property type="component" value="Chromosome"/>
</dbReference>
<dbReference type="GO" id="GO:0009425">
    <property type="term" value="C:bacterial-type flagellum basal body"/>
    <property type="evidence" value="ECO:0007669"/>
    <property type="project" value="UniProtKB-SubCell"/>
</dbReference>
<dbReference type="GO" id="GO:0003774">
    <property type="term" value="F:cytoskeletal motor activity"/>
    <property type="evidence" value="ECO:0007669"/>
    <property type="project" value="InterPro"/>
</dbReference>
<dbReference type="GO" id="GO:0005198">
    <property type="term" value="F:structural molecule activity"/>
    <property type="evidence" value="ECO:0007669"/>
    <property type="project" value="InterPro"/>
</dbReference>
<dbReference type="GO" id="GO:0071973">
    <property type="term" value="P:bacterial-type flagellum-dependent cell motility"/>
    <property type="evidence" value="ECO:0007669"/>
    <property type="project" value="InterPro"/>
</dbReference>
<dbReference type="HAMAP" id="MF_00724">
    <property type="entry name" value="FliE"/>
    <property type="match status" value="1"/>
</dbReference>
<dbReference type="InterPro" id="IPR001624">
    <property type="entry name" value="FliE"/>
</dbReference>
<dbReference type="NCBIfam" id="TIGR00205">
    <property type="entry name" value="fliE"/>
    <property type="match status" value="1"/>
</dbReference>
<dbReference type="PANTHER" id="PTHR34653">
    <property type="match status" value="1"/>
</dbReference>
<dbReference type="PANTHER" id="PTHR34653:SF1">
    <property type="entry name" value="FLAGELLAR HOOK-BASAL BODY COMPLEX PROTEIN FLIE"/>
    <property type="match status" value="1"/>
</dbReference>
<dbReference type="Pfam" id="PF02049">
    <property type="entry name" value="FliE"/>
    <property type="match status" value="1"/>
</dbReference>
<dbReference type="PRINTS" id="PR01006">
    <property type="entry name" value="FLGHOOKFLIE"/>
</dbReference>
<proteinExistence type="inferred from homology"/>
<organism>
    <name type="scientific">Pseudomonas syringae pv. tomato (strain ATCC BAA-871 / DC3000)</name>
    <dbReference type="NCBI Taxonomy" id="223283"/>
    <lineage>
        <taxon>Bacteria</taxon>
        <taxon>Pseudomonadati</taxon>
        <taxon>Pseudomonadota</taxon>
        <taxon>Gammaproteobacteria</taxon>
        <taxon>Pseudomonadales</taxon>
        <taxon>Pseudomonadaceae</taxon>
        <taxon>Pseudomonas</taxon>
    </lineage>
</organism>
<reference key="1">
    <citation type="journal article" date="2003" name="Proc. Natl. Acad. Sci. U.S.A.">
        <title>The complete genome sequence of the Arabidopsis and tomato pathogen Pseudomonas syringae pv. tomato DC3000.</title>
        <authorList>
            <person name="Buell C.R."/>
            <person name="Joardar V."/>
            <person name="Lindeberg M."/>
            <person name="Selengut J."/>
            <person name="Paulsen I.T."/>
            <person name="Gwinn M.L."/>
            <person name="Dodson R.J."/>
            <person name="DeBoy R.T."/>
            <person name="Durkin A.S."/>
            <person name="Kolonay J.F."/>
            <person name="Madupu R."/>
            <person name="Daugherty S.C."/>
            <person name="Brinkac L.M."/>
            <person name="Beanan M.J."/>
            <person name="Haft D.H."/>
            <person name="Nelson W.C."/>
            <person name="Davidsen T.M."/>
            <person name="Zafar N."/>
            <person name="Zhou L."/>
            <person name="Liu J."/>
            <person name="Yuan Q."/>
            <person name="Khouri H.M."/>
            <person name="Fedorova N.B."/>
            <person name="Tran B."/>
            <person name="Russell D."/>
            <person name="Berry K.J."/>
            <person name="Utterback T.R."/>
            <person name="Van Aken S.E."/>
            <person name="Feldblyum T.V."/>
            <person name="D'Ascenzo M."/>
            <person name="Deng W.-L."/>
            <person name="Ramos A.R."/>
            <person name="Alfano J.R."/>
            <person name="Cartinhour S."/>
            <person name="Chatterjee A.K."/>
            <person name="Delaney T.P."/>
            <person name="Lazarowitz S.G."/>
            <person name="Martin G.B."/>
            <person name="Schneider D.J."/>
            <person name="Tang X."/>
            <person name="Bender C.L."/>
            <person name="White O."/>
            <person name="Fraser C.M."/>
            <person name="Collmer A."/>
        </authorList>
    </citation>
    <scope>NUCLEOTIDE SEQUENCE [LARGE SCALE GENOMIC DNA]</scope>
    <source>
        <strain>ATCC BAA-871 / DC3000</strain>
    </source>
</reference>
<feature type="chain" id="PRO_0000105558" description="Flagellar hook-basal body complex protein FliE">
    <location>
        <begin position="1"/>
        <end position="109"/>
    </location>
</feature>
<sequence length="109" mass="11690">MSQGVEFNRLMLDMRAMQMDAMSAPKPVSGAQEAGASSFADMLGQAVNKVAQTQQASSQLANAFEVGKSGIDLTDVMISSQKASVSFQALTQVRNKLVQAYQDIMQMPV</sequence>
<gene>
    <name evidence="1" type="primary">fliE</name>
    <name type="ordered locus">PSPTO_1957</name>
</gene>
<protein>
    <recommendedName>
        <fullName evidence="1">Flagellar hook-basal body complex protein FliE</fullName>
    </recommendedName>
</protein>
<comment type="subcellular location">
    <subcellularLocation>
        <location evidence="1">Bacterial flagellum basal body</location>
    </subcellularLocation>
</comment>
<comment type="similarity">
    <text evidence="1">Belongs to the FliE family.</text>
</comment>
<comment type="sequence caution" evidence="2">
    <conflict type="erroneous initiation">
        <sequence resource="EMBL-CDS" id="AAO55475"/>
    </conflict>
</comment>
<evidence type="ECO:0000255" key="1">
    <source>
        <dbReference type="HAMAP-Rule" id="MF_00724"/>
    </source>
</evidence>
<evidence type="ECO:0000305" key="2"/>
<accession>Q884X9</accession>